<dbReference type="EMBL" id="AJ235270">
    <property type="protein sequence ID" value="CAA14510.1"/>
    <property type="molecule type" value="Genomic_DNA"/>
</dbReference>
<dbReference type="PIR" id="G71711">
    <property type="entry name" value="G71711"/>
</dbReference>
<dbReference type="RefSeq" id="NP_220433.1">
    <property type="nucleotide sequence ID" value="NC_000963.1"/>
</dbReference>
<dbReference type="RefSeq" id="WP_004596645.1">
    <property type="nucleotide sequence ID" value="NC_000963.1"/>
</dbReference>
<dbReference type="SMR" id="Q9ZEA6"/>
<dbReference type="STRING" id="272947.gene:17555122"/>
<dbReference type="EnsemblBacteria" id="CAA14510">
    <property type="protein sequence ID" value="CAA14510"/>
    <property type="gene ID" value="CAA14510"/>
</dbReference>
<dbReference type="GeneID" id="57569167"/>
<dbReference type="KEGG" id="rpr:RP039"/>
<dbReference type="PATRIC" id="fig|272947.5.peg.40"/>
<dbReference type="eggNOG" id="COG0360">
    <property type="taxonomic scope" value="Bacteria"/>
</dbReference>
<dbReference type="HOGENOM" id="CLU_113441_2_0_5"/>
<dbReference type="OrthoDB" id="9812702at2"/>
<dbReference type="Proteomes" id="UP000002480">
    <property type="component" value="Chromosome"/>
</dbReference>
<dbReference type="GO" id="GO:0022627">
    <property type="term" value="C:cytosolic small ribosomal subunit"/>
    <property type="evidence" value="ECO:0007669"/>
    <property type="project" value="TreeGrafter"/>
</dbReference>
<dbReference type="GO" id="GO:0070181">
    <property type="term" value="F:small ribosomal subunit rRNA binding"/>
    <property type="evidence" value="ECO:0007669"/>
    <property type="project" value="TreeGrafter"/>
</dbReference>
<dbReference type="GO" id="GO:0003735">
    <property type="term" value="F:structural constituent of ribosome"/>
    <property type="evidence" value="ECO:0007669"/>
    <property type="project" value="InterPro"/>
</dbReference>
<dbReference type="GO" id="GO:0006412">
    <property type="term" value="P:translation"/>
    <property type="evidence" value="ECO:0007669"/>
    <property type="project" value="UniProtKB-UniRule"/>
</dbReference>
<dbReference type="CDD" id="cd00473">
    <property type="entry name" value="bS6"/>
    <property type="match status" value="1"/>
</dbReference>
<dbReference type="Gene3D" id="3.30.70.60">
    <property type="match status" value="1"/>
</dbReference>
<dbReference type="HAMAP" id="MF_00360">
    <property type="entry name" value="Ribosomal_bS6"/>
    <property type="match status" value="1"/>
</dbReference>
<dbReference type="InterPro" id="IPR000529">
    <property type="entry name" value="Ribosomal_bS6"/>
</dbReference>
<dbReference type="InterPro" id="IPR035980">
    <property type="entry name" value="Ribosomal_bS6_sf"/>
</dbReference>
<dbReference type="InterPro" id="IPR020814">
    <property type="entry name" value="Ribosomal_S6_plastid/chlpt"/>
</dbReference>
<dbReference type="InterPro" id="IPR014717">
    <property type="entry name" value="Transl_elong_EF1B/ribsomal_bS6"/>
</dbReference>
<dbReference type="NCBIfam" id="TIGR00166">
    <property type="entry name" value="S6"/>
    <property type="match status" value="1"/>
</dbReference>
<dbReference type="PANTHER" id="PTHR21011">
    <property type="entry name" value="MITOCHONDRIAL 28S RIBOSOMAL PROTEIN S6"/>
    <property type="match status" value="1"/>
</dbReference>
<dbReference type="PANTHER" id="PTHR21011:SF1">
    <property type="entry name" value="SMALL RIBOSOMAL SUBUNIT PROTEIN BS6M"/>
    <property type="match status" value="1"/>
</dbReference>
<dbReference type="Pfam" id="PF01250">
    <property type="entry name" value="Ribosomal_S6"/>
    <property type="match status" value="1"/>
</dbReference>
<dbReference type="SUPFAM" id="SSF54995">
    <property type="entry name" value="Ribosomal protein S6"/>
    <property type="match status" value="1"/>
</dbReference>
<feature type="chain" id="PRO_0000176829" description="Small ribosomal subunit protein bS6">
    <location>
        <begin position="1"/>
        <end position="121"/>
    </location>
</feature>
<gene>
    <name type="primary">rpsF</name>
    <name type="ordered locus">RP039</name>
</gene>
<accession>Q9ZEA6</accession>
<evidence type="ECO:0000250" key="1"/>
<evidence type="ECO:0000305" key="2"/>
<keyword id="KW-1185">Reference proteome</keyword>
<keyword id="KW-0687">Ribonucleoprotein</keyword>
<keyword id="KW-0689">Ribosomal protein</keyword>
<keyword id="KW-0694">RNA-binding</keyword>
<keyword id="KW-0699">rRNA-binding</keyword>
<organism>
    <name type="scientific">Rickettsia prowazekii (strain Madrid E)</name>
    <dbReference type="NCBI Taxonomy" id="272947"/>
    <lineage>
        <taxon>Bacteria</taxon>
        <taxon>Pseudomonadati</taxon>
        <taxon>Pseudomonadota</taxon>
        <taxon>Alphaproteobacteria</taxon>
        <taxon>Rickettsiales</taxon>
        <taxon>Rickettsiaceae</taxon>
        <taxon>Rickettsieae</taxon>
        <taxon>Rickettsia</taxon>
        <taxon>typhus group</taxon>
    </lineage>
</organism>
<proteinExistence type="inferred from homology"/>
<protein>
    <recommendedName>
        <fullName evidence="2">Small ribosomal subunit protein bS6</fullName>
    </recommendedName>
    <alternativeName>
        <fullName>30S ribosomal protein S6</fullName>
    </alternativeName>
</protein>
<comment type="function">
    <text evidence="1">Binds together with bS18 to 16S ribosomal RNA.</text>
</comment>
<comment type="similarity">
    <text evidence="2">Belongs to the bacterial ribosomal protein bS6 family.</text>
</comment>
<name>RS6_RICPR</name>
<reference key="1">
    <citation type="journal article" date="1998" name="Nature">
        <title>The genome sequence of Rickettsia prowazekii and the origin of mitochondria.</title>
        <authorList>
            <person name="Andersson S.G.E."/>
            <person name="Zomorodipour A."/>
            <person name="Andersson J.O."/>
            <person name="Sicheritz-Ponten T."/>
            <person name="Alsmark U.C.M."/>
            <person name="Podowski R.M."/>
            <person name="Naeslund A.K."/>
            <person name="Eriksson A.-S."/>
            <person name="Winkler H.H."/>
            <person name="Kurland C.G."/>
        </authorList>
    </citation>
    <scope>NUCLEOTIDE SEQUENCE [LARGE SCALE GENOMIC DNA]</scope>
    <source>
        <strain>Madrid E</strain>
    </source>
</reference>
<sequence length="121" mass="13989">MSFYESVFIIRQDVSLNDIDKIVDDFTKIIKDNNGTIIKKEYWGLRTLAYKIGNNKKGHYYFLGIDITSNVKEELERKMKLNENIIRFLTIKADSISSEPSPILKNQSTENTPVIDVTINN</sequence>